<accession>B0U0Y8</accession>
<evidence type="ECO:0000255" key="1">
    <source>
        <dbReference type="HAMAP-Rule" id="MF_01328"/>
    </source>
</evidence>
<evidence type="ECO:0000256" key="2">
    <source>
        <dbReference type="SAM" id="MobiDB-lite"/>
    </source>
</evidence>
<evidence type="ECO:0000305" key="3"/>
<name>RL4_FRAP2</name>
<feature type="chain" id="PRO_1000086521" description="Large ribosomal subunit protein uL4">
    <location>
        <begin position="1"/>
        <end position="207"/>
    </location>
</feature>
<feature type="region of interest" description="Disordered" evidence="2">
    <location>
        <begin position="48"/>
        <end position="70"/>
    </location>
</feature>
<keyword id="KW-0687">Ribonucleoprotein</keyword>
<keyword id="KW-0689">Ribosomal protein</keyword>
<keyword id="KW-0694">RNA-binding</keyword>
<keyword id="KW-0699">rRNA-binding</keyword>
<organism>
    <name type="scientific">Francisella philomiragia subsp. philomiragia (strain ATCC 25017 / CCUG 19701 / FSC 153 / O#319-036)</name>
    <dbReference type="NCBI Taxonomy" id="484022"/>
    <lineage>
        <taxon>Bacteria</taxon>
        <taxon>Pseudomonadati</taxon>
        <taxon>Pseudomonadota</taxon>
        <taxon>Gammaproteobacteria</taxon>
        <taxon>Thiotrichales</taxon>
        <taxon>Francisellaceae</taxon>
        <taxon>Francisella</taxon>
    </lineage>
</organism>
<proteinExistence type="inferred from homology"/>
<comment type="function">
    <text evidence="1">One of the primary rRNA binding proteins, this protein initially binds near the 5'-end of the 23S rRNA. It is important during the early stages of 50S assembly. It makes multiple contacts with different domains of the 23S rRNA in the assembled 50S subunit and ribosome.</text>
</comment>
<comment type="function">
    <text evidence="1">Forms part of the polypeptide exit tunnel.</text>
</comment>
<comment type="subunit">
    <text evidence="1">Part of the 50S ribosomal subunit.</text>
</comment>
<comment type="similarity">
    <text evidence="1">Belongs to the universal ribosomal protein uL4 family.</text>
</comment>
<dbReference type="EMBL" id="CP000937">
    <property type="protein sequence ID" value="ABZ86804.1"/>
    <property type="molecule type" value="Genomic_DNA"/>
</dbReference>
<dbReference type="SMR" id="B0U0Y8"/>
<dbReference type="KEGG" id="fph:Fphi_0585"/>
<dbReference type="eggNOG" id="COG0088">
    <property type="taxonomic scope" value="Bacteria"/>
</dbReference>
<dbReference type="HOGENOM" id="CLU_041575_5_2_6"/>
<dbReference type="GO" id="GO:1990904">
    <property type="term" value="C:ribonucleoprotein complex"/>
    <property type="evidence" value="ECO:0007669"/>
    <property type="project" value="UniProtKB-KW"/>
</dbReference>
<dbReference type="GO" id="GO:0005840">
    <property type="term" value="C:ribosome"/>
    <property type="evidence" value="ECO:0007669"/>
    <property type="project" value="UniProtKB-KW"/>
</dbReference>
<dbReference type="GO" id="GO:0019843">
    <property type="term" value="F:rRNA binding"/>
    <property type="evidence" value="ECO:0007669"/>
    <property type="project" value="UniProtKB-UniRule"/>
</dbReference>
<dbReference type="GO" id="GO:0003735">
    <property type="term" value="F:structural constituent of ribosome"/>
    <property type="evidence" value="ECO:0007669"/>
    <property type="project" value="InterPro"/>
</dbReference>
<dbReference type="GO" id="GO:0006412">
    <property type="term" value="P:translation"/>
    <property type="evidence" value="ECO:0007669"/>
    <property type="project" value="UniProtKB-UniRule"/>
</dbReference>
<dbReference type="Gene3D" id="3.40.1370.10">
    <property type="match status" value="1"/>
</dbReference>
<dbReference type="HAMAP" id="MF_01328_B">
    <property type="entry name" value="Ribosomal_uL4_B"/>
    <property type="match status" value="1"/>
</dbReference>
<dbReference type="InterPro" id="IPR002136">
    <property type="entry name" value="Ribosomal_uL4"/>
</dbReference>
<dbReference type="InterPro" id="IPR013005">
    <property type="entry name" value="Ribosomal_uL4-like"/>
</dbReference>
<dbReference type="InterPro" id="IPR023574">
    <property type="entry name" value="Ribosomal_uL4_dom_sf"/>
</dbReference>
<dbReference type="NCBIfam" id="TIGR03953">
    <property type="entry name" value="rplD_bact"/>
    <property type="match status" value="1"/>
</dbReference>
<dbReference type="PANTHER" id="PTHR10746">
    <property type="entry name" value="50S RIBOSOMAL PROTEIN L4"/>
    <property type="match status" value="1"/>
</dbReference>
<dbReference type="PANTHER" id="PTHR10746:SF6">
    <property type="entry name" value="LARGE RIBOSOMAL SUBUNIT PROTEIN UL4M"/>
    <property type="match status" value="1"/>
</dbReference>
<dbReference type="Pfam" id="PF00573">
    <property type="entry name" value="Ribosomal_L4"/>
    <property type="match status" value="1"/>
</dbReference>
<dbReference type="SUPFAM" id="SSF52166">
    <property type="entry name" value="Ribosomal protein L4"/>
    <property type="match status" value="1"/>
</dbReference>
<reference key="1">
    <citation type="submission" date="2007-12" db="EMBL/GenBank/DDBJ databases">
        <title>Complete sequence of chromosome of Francisella philomiragia subsp. philomiragia ATCC 25017.</title>
        <authorList>
            <consortium name="US DOE Joint Genome Institute"/>
            <person name="Copeland A."/>
            <person name="Lucas S."/>
            <person name="Lapidus A."/>
            <person name="Barry K."/>
            <person name="Detter J.C."/>
            <person name="Glavina del Rio T."/>
            <person name="Hammon N."/>
            <person name="Israni S."/>
            <person name="Dalin E."/>
            <person name="Tice H."/>
            <person name="Pitluck S."/>
            <person name="Chain P."/>
            <person name="Malfatti S."/>
            <person name="Shin M."/>
            <person name="Vergez L."/>
            <person name="Schmutz J."/>
            <person name="Larimer F."/>
            <person name="Land M."/>
            <person name="Hauser L."/>
            <person name="Richardson P."/>
        </authorList>
    </citation>
    <scope>NUCLEOTIDE SEQUENCE [LARGE SCALE GENOMIC DNA]</scope>
    <source>
        <strain>ATCC 25017 / CCUG 19701 / FSC 153 / O#319-036</strain>
    </source>
</reference>
<sequence length="207" mass="22571">MDLNIKSLAGAEAGVVGVAEGVFAADYNESLIHQVVVAYMAGARQGTKAQKTRSEVSGGGAKPWRQKGTGRARAGTIRSPIFRKGGVTFAAKPKSYKQKVNRKMYSGAVKSILSELVRSDRMTVVESLRLETPKTKEFKVIVDSLGVKDVLFVVGVEEFNENLYLSSRNLKNVAVCDSVEINPVSLVCFENVVFTKQAIKEIEEKLV</sequence>
<gene>
    <name evidence="1" type="primary">rplD</name>
    <name type="ordered locus">Fphi_0585</name>
</gene>
<protein>
    <recommendedName>
        <fullName evidence="1">Large ribosomal subunit protein uL4</fullName>
    </recommendedName>
    <alternativeName>
        <fullName evidence="3">50S ribosomal protein L4</fullName>
    </alternativeName>
</protein>